<accession>A4SVE2</accession>
<keyword id="KW-0028">Amino-acid biosynthesis</keyword>
<keyword id="KW-0963">Cytoplasm</keyword>
<keyword id="KW-0521">NADP</keyword>
<keyword id="KW-0560">Oxidoreductase</keyword>
<keyword id="KW-0641">Proline biosynthesis</keyword>
<keyword id="KW-1185">Reference proteome</keyword>
<sequence length="417" mass="45153">MQDIGKCARSASRAMARASSEQKNQALLHIAKVVRQKSEEIQQVNQVDVERAKVNGQDAAFIDRLTMTPKTIETMALGLEQIVLLDDPIGKIGTLKKQASGIELGQMRVPLGVIGIIYESRPNVTIDAAALCLKSGNAVILRGGSEAIDSNTLLAQIIQEGLAAAGLPKDAVQVVTITDRAAVGEMITMTQYIDVIVPRGGKSLIARLMAEARVPMIKHLDGICHTYIDADADIAMAIKVCDNAKTQRYAPCNAMETLLVNRDIAPKVLPSLCKVYQDKGVELRVDALTRQTLEQNGFQNLVDATEADWQTEYLAPILSIKTVADIDEAMNHIEHYGSKHTDAIITNNKAQADRFLREVDSASVMVNASTRFADGFEYGLGAEIGISNDKLHARGPVGLDGLTSLKYVVLGHGEIRT</sequence>
<reference key="1">
    <citation type="journal article" date="2012" name="Stand. Genomic Sci.">
        <title>Complete genome sequence of Polynucleobacter necessarius subsp. asymbioticus type strain (QLW-P1DMWA-1(T)).</title>
        <authorList>
            <person name="Meincke L."/>
            <person name="Copeland A."/>
            <person name="Lapidus A."/>
            <person name="Lucas S."/>
            <person name="Berry K.W."/>
            <person name="Del Rio T.G."/>
            <person name="Hammon N."/>
            <person name="Dalin E."/>
            <person name="Tice H."/>
            <person name="Pitluck S."/>
            <person name="Richardson P."/>
            <person name="Bruce D."/>
            <person name="Goodwin L."/>
            <person name="Han C."/>
            <person name="Tapia R."/>
            <person name="Detter J.C."/>
            <person name="Schmutz J."/>
            <person name="Brettin T."/>
            <person name="Larimer F."/>
            <person name="Land M."/>
            <person name="Hauser L."/>
            <person name="Kyrpides N.C."/>
            <person name="Ivanova N."/>
            <person name="Goker M."/>
            <person name="Woyke T."/>
            <person name="Wu Q.L."/>
            <person name="Pockl M."/>
            <person name="Hahn M.W."/>
            <person name="Klenk H.P."/>
        </authorList>
    </citation>
    <scope>NUCLEOTIDE SEQUENCE [LARGE SCALE GENOMIC DNA]</scope>
    <source>
        <strain>DSM 18221 / CIP 109841 / QLW-P1DMWA-1</strain>
    </source>
</reference>
<comment type="function">
    <text evidence="1">Catalyzes the NADPH-dependent reduction of L-glutamate 5-phosphate into L-glutamate 5-semialdehyde and phosphate. The product spontaneously undergoes cyclization to form 1-pyrroline-5-carboxylate.</text>
</comment>
<comment type="catalytic activity">
    <reaction evidence="1">
        <text>L-glutamate 5-semialdehyde + phosphate + NADP(+) = L-glutamyl 5-phosphate + NADPH + H(+)</text>
        <dbReference type="Rhea" id="RHEA:19541"/>
        <dbReference type="ChEBI" id="CHEBI:15378"/>
        <dbReference type="ChEBI" id="CHEBI:43474"/>
        <dbReference type="ChEBI" id="CHEBI:57783"/>
        <dbReference type="ChEBI" id="CHEBI:58066"/>
        <dbReference type="ChEBI" id="CHEBI:58274"/>
        <dbReference type="ChEBI" id="CHEBI:58349"/>
        <dbReference type="EC" id="1.2.1.41"/>
    </reaction>
</comment>
<comment type="pathway">
    <text evidence="1">Amino-acid biosynthesis; L-proline biosynthesis; L-glutamate 5-semialdehyde from L-glutamate: step 2/2.</text>
</comment>
<comment type="subcellular location">
    <subcellularLocation>
        <location evidence="1">Cytoplasm</location>
    </subcellularLocation>
</comment>
<comment type="similarity">
    <text evidence="1">Belongs to the gamma-glutamyl phosphate reductase family.</text>
</comment>
<comment type="sequence caution" evidence="2">
    <conflict type="erroneous initiation">
        <sequence resource="EMBL-CDS" id="ABP33456"/>
    </conflict>
</comment>
<organism>
    <name type="scientific">Polynucleobacter asymbioticus (strain DSM 18221 / CIP 109841 / QLW-P1DMWA-1)</name>
    <name type="common">Polynucleobacter necessarius subsp. asymbioticus</name>
    <dbReference type="NCBI Taxonomy" id="312153"/>
    <lineage>
        <taxon>Bacteria</taxon>
        <taxon>Pseudomonadati</taxon>
        <taxon>Pseudomonadota</taxon>
        <taxon>Betaproteobacteria</taxon>
        <taxon>Burkholderiales</taxon>
        <taxon>Burkholderiaceae</taxon>
        <taxon>Polynucleobacter</taxon>
    </lineage>
</organism>
<dbReference type="EC" id="1.2.1.41" evidence="1"/>
<dbReference type="EMBL" id="CP000655">
    <property type="protein sequence ID" value="ABP33456.1"/>
    <property type="status" value="ALT_INIT"/>
    <property type="molecule type" value="Genomic_DNA"/>
</dbReference>
<dbReference type="RefSeq" id="WP_011902081.1">
    <property type="nucleotide sequence ID" value="NC_009379.1"/>
</dbReference>
<dbReference type="SMR" id="A4SVE2"/>
<dbReference type="GeneID" id="31480585"/>
<dbReference type="KEGG" id="pnu:Pnuc_0235"/>
<dbReference type="eggNOG" id="COG0014">
    <property type="taxonomic scope" value="Bacteria"/>
</dbReference>
<dbReference type="HOGENOM" id="CLU_030231_0_0_4"/>
<dbReference type="UniPathway" id="UPA00098">
    <property type="reaction ID" value="UER00360"/>
</dbReference>
<dbReference type="Proteomes" id="UP000000231">
    <property type="component" value="Chromosome"/>
</dbReference>
<dbReference type="GO" id="GO:0005737">
    <property type="term" value="C:cytoplasm"/>
    <property type="evidence" value="ECO:0007669"/>
    <property type="project" value="UniProtKB-SubCell"/>
</dbReference>
<dbReference type="GO" id="GO:0004350">
    <property type="term" value="F:glutamate-5-semialdehyde dehydrogenase activity"/>
    <property type="evidence" value="ECO:0007669"/>
    <property type="project" value="UniProtKB-UniRule"/>
</dbReference>
<dbReference type="GO" id="GO:0050661">
    <property type="term" value="F:NADP binding"/>
    <property type="evidence" value="ECO:0007669"/>
    <property type="project" value="InterPro"/>
</dbReference>
<dbReference type="GO" id="GO:0055129">
    <property type="term" value="P:L-proline biosynthetic process"/>
    <property type="evidence" value="ECO:0007669"/>
    <property type="project" value="UniProtKB-UniRule"/>
</dbReference>
<dbReference type="CDD" id="cd07079">
    <property type="entry name" value="ALDH_F18-19_ProA-GPR"/>
    <property type="match status" value="1"/>
</dbReference>
<dbReference type="FunFam" id="3.40.309.10:FF:000006">
    <property type="entry name" value="Gamma-glutamyl phosphate reductase"/>
    <property type="match status" value="1"/>
</dbReference>
<dbReference type="Gene3D" id="3.40.605.10">
    <property type="entry name" value="Aldehyde Dehydrogenase, Chain A, domain 1"/>
    <property type="match status" value="1"/>
</dbReference>
<dbReference type="Gene3D" id="3.40.309.10">
    <property type="entry name" value="Aldehyde Dehydrogenase, Chain A, domain 2"/>
    <property type="match status" value="1"/>
</dbReference>
<dbReference type="HAMAP" id="MF_00412">
    <property type="entry name" value="ProA"/>
    <property type="match status" value="1"/>
</dbReference>
<dbReference type="InterPro" id="IPR016161">
    <property type="entry name" value="Ald_DH/histidinol_DH"/>
</dbReference>
<dbReference type="InterPro" id="IPR016163">
    <property type="entry name" value="Ald_DH_C"/>
</dbReference>
<dbReference type="InterPro" id="IPR016162">
    <property type="entry name" value="Ald_DH_N"/>
</dbReference>
<dbReference type="InterPro" id="IPR015590">
    <property type="entry name" value="Aldehyde_DH_dom"/>
</dbReference>
<dbReference type="InterPro" id="IPR020593">
    <property type="entry name" value="G-glutamylP_reductase_CS"/>
</dbReference>
<dbReference type="InterPro" id="IPR012134">
    <property type="entry name" value="Glu-5-SA_DH"/>
</dbReference>
<dbReference type="InterPro" id="IPR000965">
    <property type="entry name" value="GPR_dom"/>
</dbReference>
<dbReference type="NCBIfam" id="NF001221">
    <property type="entry name" value="PRK00197.1"/>
    <property type="match status" value="1"/>
</dbReference>
<dbReference type="NCBIfam" id="TIGR00407">
    <property type="entry name" value="proA"/>
    <property type="match status" value="1"/>
</dbReference>
<dbReference type="PANTHER" id="PTHR11063:SF8">
    <property type="entry name" value="DELTA-1-PYRROLINE-5-CARBOXYLATE SYNTHASE"/>
    <property type="match status" value="1"/>
</dbReference>
<dbReference type="PANTHER" id="PTHR11063">
    <property type="entry name" value="GLUTAMATE SEMIALDEHYDE DEHYDROGENASE"/>
    <property type="match status" value="1"/>
</dbReference>
<dbReference type="Pfam" id="PF00171">
    <property type="entry name" value="Aldedh"/>
    <property type="match status" value="2"/>
</dbReference>
<dbReference type="PIRSF" id="PIRSF000151">
    <property type="entry name" value="GPR"/>
    <property type="match status" value="1"/>
</dbReference>
<dbReference type="SUPFAM" id="SSF53720">
    <property type="entry name" value="ALDH-like"/>
    <property type="match status" value="1"/>
</dbReference>
<dbReference type="PROSITE" id="PS01223">
    <property type="entry name" value="PROA"/>
    <property type="match status" value="1"/>
</dbReference>
<name>PROA_POLAQ</name>
<evidence type="ECO:0000255" key="1">
    <source>
        <dbReference type="HAMAP-Rule" id="MF_00412"/>
    </source>
</evidence>
<evidence type="ECO:0000305" key="2"/>
<protein>
    <recommendedName>
        <fullName evidence="1">Gamma-glutamyl phosphate reductase</fullName>
        <shortName evidence="1">GPR</shortName>
        <ecNumber evidence="1">1.2.1.41</ecNumber>
    </recommendedName>
    <alternativeName>
        <fullName evidence="1">Glutamate-5-semialdehyde dehydrogenase</fullName>
    </alternativeName>
    <alternativeName>
        <fullName evidence="1">Glutamyl-gamma-semialdehyde dehydrogenase</fullName>
        <shortName evidence="1">GSA dehydrogenase</shortName>
    </alternativeName>
</protein>
<feature type="chain" id="PRO_0000340906" description="Gamma-glutamyl phosphate reductase">
    <location>
        <begin position="1"/>
        <end position="417"/>
    </location>
</feature>
<proteinExistence type="inferred from homology"/>
<gene>
    <name evidence="1" type="primary">proA</name>
    <name type="ordered locus">Pnuc_0235</name>
</gene>